<comment type="similarity">
    <text evidence="1">Belongs to the UPF0434 family.</text>
</comment>
<accession>C0PXV4</accession>
<reference key="1">
    <citation type="journal article" date="2009" name="PLoS ONE">
        <title>Salmonella paratyphi C: genetic divergence from Salmonella choleraesuis and pathogenic convergence with Salmonella typhi.</title>
        <authorList>
            <person name="Liu W.-Q."/>
            <person name="Feng Y."/>
            <person name="Wang Y."/>
            <person name="Zou Q.-H."/>
            <person name="Chen F."/>
            <person name="Guo J.-T."/>
            <person name="Peng Y.-H."/>
            <person name="Jin Y."/>
            <person name="Li Y.-G."/>
            <person name="Hu S.-N."/>
            <person name="Johnston R.N."/>
            <person name="Liu G.-R."/>
            <person name="Liu S.-L."/>
        </authorList>
    </citation>
    <scope>NUCLEOTIDE SEQUENCE [LARGE SCALE GENOMIC DNA]</scope>
    <source>
        <strain>RKS4594</strain>
    </source>
</reference>
<evidence type="ECO:0000255" key="1">
    <source>
        <dbReference type="HAMAP-Rule" id="MF_01187"/>
    </source>
</evidence>
<protein>
    <recommendedName>
        <fullName evidence="1">UPF0434 protein YcaR</fullName>
    </recommendedName>
</protein>
<gene>
    <name evidence="1" type="primary">ycaR</name>
    <name type="ordered locus">SPC_0988</name>
</gene>
<organism>
    <name type="scientific">Salmonella paratyphi C (strain RKS4594)</name>
    <dbReference type="NCBI Taxonomy" id="476213"/>
    <lineage>
        <taxon>Bacteria</taxon>
        <taxon>Pseudomonadati</taxon>
        <taxon>Pseudomonadota</taxon>
        <taxon>Gammaproteobacteria</taxon>
        <taxon>Enterobacterales</taxon>
        <taxon>Enterobacteriaceae</taxon>
        <taxon>Salmonella</taxon>
    </lineage>
</organism>
<feature type="chain" id="PRO_1000164489" description="UPF0434 protein YcaR">
    <location>
        <begin position="1"/>
        <end position="60"/>
    </location>
</feature>
<name>YCAR_SALPC</name>
<proteinExistence type="inferred from homology"/>
<sequence>MDHRLLEIIACPVCNGKLWYNQEQQELICKLDNLAFPLRDGIPVLLENEARALTSDESKS</sequence>
<dbReference type="EMBL" id="CP000857">
    <property type="protein sequence ID" value="ACN45154.1"/>
    <property type="molecule type" value="Genomic_DNA"/>
</dbReference>
<dbReference type="RefSeq" id="WP_000350061.1">
    <property type="nucleotide sequence ID" value="NC_012125.1"/>
</dbReference>
<dbReference type="SMR" id="C0PXV4"/>
<dbReference type="KEGG" id="sei:SPC_0988"/>
<dbReference type="HOGENOM" id="CLU_155659_3_1_6"/>
<dbReference type="Proteomes" id="UP000001599">
    <property type="component" value="Chromosome"/>
</dbReference>
<dbReference type="GO" id="GO:0005829">
    <property type="term" value="C:cytosol"/>
    <property type="evidence" value="ECO:0007669"/>
    <property type="project" value="TreeGrafter"/>
</dbReference>
<dbReference type="FunFam" id="2.20.25.10:FF:000002">
    <property type="entry name" value="UPF0434 protein YcaR"/>
    <property type="match status" value="1"/>
</dbReference>
<dbReference type="Gene3D" id="2.20.25.10">
    <property type="match status" value="1"/>
</dbReference>
<dbReference type="HAMAP" id="MF_01187">
    <property type="entry name" value="UPF0434"/>
    <property type="match status" value="1"/>
</dbReference>
<dbReference type="InterPro" id="IPR005651">
    <property type="entry name" value="Trm112-like"/>
</dbReference>
<dbReference type="NCBIfam" id="NF008806">
    <property type="entry name" value="PRK11827.1"/>
    <property type="match status" value="1"/>
</dbReference>
<dbReference type="PANTHER" id="PTHR33505:SF4">
    <property type="entry name" value="PROTEIN PREY, MITOCHONDRIAL"/>
    <property type="match status" value="1"/>
</dbReference>
<dbReference type="PANTHER" id="PTHR33505">
    <property type="entry name" value="ZGC:162634"/>
    <property type="match status" value="1"/>
</dbReference>
<dbReference type="Pfam" id="PF03966">
    <property type="entry name" value="Trm112p"/>
    <property type="match status" value="1"/>
</dbReference>
<dbReference type="SUPFAM" id="SSF158997">
    <property type="entry name" value="Trm112p-like"/>
    <property type="match status" value="1"/>
</dbReference>